<gene>
    <name evidence="1" type="primary">dxs</name>
    <name type="ordered locus">RL0973</name>
</gene>
<sequence>MTQLPKTPLLDQVIYPADLRKLEDRDLPQLAREVRDEMIDAVSRTGGHLGAGLGVVELTIAIHSVFDTPDDRLIFDVGHQCYPHKILTGRRDRIRTLRQEDGLSGFTRRAESEYDPFGAAHSSTSISAGLGMAIAADLDKSDRRVIAVIGDGAMSAGMAYEALNNAGALDARLIVILNDNDMSIAPPTGAMSAYLARLASGRTYMGFRDFGKKLTAYLGKNIDRAITRAVEHARGYVTGGTMFEEMGFYHIGPIDGHSFDHLLPVLRNVRDNGRGPVLIHVVTQKGKGYPPAEAAADKYHGVNKFDVITGAQARVKPNAPSYTSVFAEALVQEATLDDKIVGITAAMPNGTGLDKLAEAFPSRCFDVGIAEQHAVTFAAGLAAEGYKPFAALYSTFLQRAYDQVVHDVAIQGLPVRFPIDRAGFVGADGPTHAGSFDTAFLTTLPGFVVMAAADEAELKHMVRTAVAYDGGPISFRYPRGEGVGVDMPARGEILQIGKGRIVKEGTKVALLSFGTRLADCLLAAEDLDAAGLSTTVADARFAKPLDHDLIRQLARHHEMVITVEEGSIGGFGSHVMHFLATEGLLDNGLKLRSLVMPDIWMEQAKPEAMNAHAGLDRAGIVSTVFKALGRGVAVGVAG</sequence>
<proteinExistence type="inferred from homology"/>
<comment type="function">
    <text evidence="1">Catalyzes the acyloin condensation reaction between C atoms 2 and 3 of pyruvate and glyceraldehyde 3-phosphate to yield 1-deoxy-D-xylulose-5-phosphate (DXP).</text>
</comment>
<comment type="catalytic activity">
    <reaction evidence="1">
        <text>D-glyceraldehyde 3-phosphate + pyruvate + H(+) = 1-deoxy-D-xylulose 5-phosphate + CO2</text>
        <dbReference type="Rhea" id="RHEA:12605"/>
        <dbReference type="ChEBI" id="CHEBI:15361"/>
        <dbReference type="ChEBI" id="CHEBI:15378"/>
        <dbReference type="ChEBI" id="CHEBI:16526"/>
        <dbReference type="ChEBI" id="CHEBI:57792"/>
        <dbReference type="ChEBI" id="CHEBI:59776"/>
        <dbReference type="EC" id="2.2.1.7"/>
    </reaction>
</comment>
<comment type="cofactor">
    <cofactor evidence="1">
        <name>Mg(2+)</name>
        <dbReference type="ChEBI" id="CHEBI:18420"/>
    </cofactor>
    <text evidence="1">Binds 1 Mg(2+) ion per subunit.</text>
</comment>
<comment type="cofactor">
    <cofactor evidence="1">
        <name>thiamine diphosphate</name>
        <dbReference type="ChEBI" id="CHEBI:58937"/>
    </cofactor>
    <text evidence="1">Binds 1 thiamine pyrophosphate per subunit.</text>
</comment>
<comment type="pathway">
    <text evidence="1">Metabolic intermediate biosynthesis; 1-deoxy-D-xylulose 5-phosphate biosynthesis; 1-deoxy-D-xylulose 5-phosphate from D-glyceraldehyde 3-phosphate and pyruvate: step 1/1.</text>
</comment>
<comment type="subunit">
    <text evidence="1">Homodimer.</text>
</comment>
<comment type="similarity">
    <text evidence="1">Belongs to the transketolase family. DXPS subfamily.</text>
</comment>
<feature type="chain" id="PRO_0000256468" description="1-deoxy-D-xylulose-5-phosphate synthase">
    <location>
        <begin position="1"/>
        <end position="638"/>
    </location>
</feature>
<feature type="binding site" evidence="1">
    <location>
        <position position="79"/>
    </location>
    <ligand>
        <name>thiamine diphosphate</name>
        <dbReference type="ChEBI" id="CHEBI:58937"/>
    </ligand>
</feature>
<feature type="binding site" evidence="1">
    <location>
        <begin position="120"/>
        <end position="122"/>
    </location>
    <ligand>
        <name>thiamine diphosphate</name>
        <dbReference type="ChEBI" id="CHEBI:58937"/>
    </ligand>
</feature>
<feature type="binding site" evidence="1">
    <location>
        <position position="151"/>
    </location>
    <ligand>
        <name>Mg(2+)</name>
        <dbReference type="ChEBI" id="CHEBI:18420"/>
    </ligand>
</feature>
<feature type="binding site" evidence="1">
    <location>
        <begin position="152"/>
        <end position="153"/>
    </location>
    <ligand>
        <name>thiamine diphosphate</name>
        <dbReference type="ChEBI" id="CHEBI:58937"/>
    </ligand>
</feature>
<feature type="binding site" evidence="1">
    <location>
        <position position="180"/>
    </location>
    <ligand>
        <name>Mg(2+)</name>
        <dbReference type="ChEBI" id="CHEBI:18420"/>
    </ligand>
</feature>
<feature type="binding site" evidence="1">
    <location>
        <position position="180"/>
    </location>
    <ligand>
        <name>thiamine diphosphate</name>
        <dbReference type="ChEBI" id="CHEBI:58937"/>
    </ligand>
</feature>
<feature type="binding site" evidence="1">
    <location>
        <position position="289"/>
    </location>
    <ligand>
        <name>thiamine diphosphate</name>
        <dbReference type="ChEBI" id="CHEBI:58937"/>
    </ligand>
</feature>
<feature type="binding site" evidence="1">
    <location>
        <position position="371"/>
    </location>
    <ligand>
        <name>thiamine diphosphate</name>
        <dbReference type="ChEBI" id="CHEBI:58937"/>
    </ligand>
</feature>
<name>DXS_RHIJ3</name>
<dbReference type="EC" id="2.2.1.7" evidence="1"/>
<dbReference type="EMBL" id="AM236080">
    <property type="protein sequence ID" value="CAK06470.1"/>
    <property type="molecule type" value="Genomic_DNA"/>
</dbReference>
<dbReference type="RefSeq" id="WP_011650711.1">
    <property type="nucleotide sequence ID" value="NC_008380.1"/>
</dbReference>
<dbReference type="SMR" id="Q1MKN4"/>
<dbReference type="EnsemblBacteria" id="CAK06470">
    <property type="protein sequence ID" value="CAK06470"/>
    <property type="gene ID" value="RL0973"/>
</dbReference>
<dbReference type="KEGG" id="rle:RL0973"/>
<dbReference type="eggNOG" id="COG1154">
    <property type="taxonomic scope" value="Bacteria"/>
</dbReference>
<dbReference type="HOGENOM" id="CLU_009227_1_4_5"/>
<dbReference type="UniPathway" id="UPA00064">
    <property type="reaction ID" value="UER00091"/>
</dbReference>
<dbReference type="Proteomes" id="UP000006575">
    <property type="component" value="Chromosome"/>
</dbReference>
<dbReference type="GO" id="GO:0008661">
    <property type="term" value="F:1-deoxy-D-xylulose-5-phosphate synthase activity"/>
    <property type="evidence" value="ECO:0007669"/>
    <property type="project" value="UniProtKB-UniRule"/>
</dbReference>
<dbReference type="GO" id="GO:0000287">
    <property type="term" value="F:magnesium ion binding"/>
    <property type="evidence" value="ECO:0007669"/>
    <property type="project" value="UniProtKB-UniRule"/>
</dbReference>
<dbReference type="GO" id="GO:0030976">
    <property type="term" value="F:thiamine pyrophosphate binding"/>
    <property type="evidence" value="ECO:0007669"/>
    <property type="project" value="UniProtKB-UniRule"/>
</dbReference>
<dbReference type="GO" id="GO:0052865">
    <property type="term" value="P:1-deoxy-D-xylulose 5-phosphate biosynthetic process"/>
    <property type="evidence" value="ECO:0007669"/>
    <property type="project" value="UniProtKB-UniPathway"/>
</dbReference>
<dbReference type="GO" id="GO:0019682">
    <property type="term" value="P:glyceraldehyde-3-phosphate metabolic process"/>
    <property type="evidence" value="ECO:0007669"/>
    <property type="project" value="UniProtKB-ARBA"/>
</dbReference>
<dbReference type="GO" id="GO:0016114">
    <property type="term" value="P:terpenoid biosynthetic process"/>
    <property type="evidence" value="ECO:0007669"/>
    <property type="project" value="UniProtKB-UniRule"/>
</dbReference>
<dbReference type="GO" id="GO:0009228">
    <property type="term" value="P:thiamine biosynthetic process"/>
    <property type="evidence" value="ECO:0007669"/>
    <property type="project" value="UniProtKB-UniRule"/>
</dbReference>
<dbReference type="CDD" id="cd02007">
    <property type="entry name" value="TPP_DXS"/>
    <property type="match status" value="1"/>
</dbReference>
<dbReference type="CDD" id="cd07033">
    <property type="entry name" value="TPP_PYR_DXS_TK_like"/>
    <property type="match status" value="1"/>
</dbReference>
<dbReference type="FunFam" id="3.40.50.920:FF:000002">
    <property type="entry name" value="1-deoxy-D-xylulose-5-phosphate synthase"/>
    <property type="match status" value="1"/>
</dbReference>
<dbReference type="FunFam" id="3.40.50.970:FF:000005">
    <property type="entry name" value="1-deoxy-D-xylulose-5-phosphate synthase"/>
    <property type="match status" value="1"/>
</dbReference>
<dbReference type="Gene3D" id="3.40.50.920">
    <property type="match status" value="1"/>
</dbReference>
<dbReference type="Gene3D" id="3.40.50.970">
    <property type="match status" value="2"/>
</dbReference>
<dbReference type="HAMAP" id="MF_00315">
    <property type="entry name" value="DXP_synth"/>
    <property type="match status" value="1"/>
</dbReference>
<dbReference type="InterPro" id="IPR005477">
    <property type="entry name" value="Dxylulose-5-P_synthase"/>
</dbReference>
<dbReference type="InterPro" id="IPR029061">
    <property type="entry name" value="THDP-binding"/>
</dbReference>
<dbReference type="InterPro" id="IPR009014">
    <property type="entry name" value="Transketo_C/PFOR_II"/>
</dbReference>
<dbReference type="InterPro" id="IPR005475">
    <property type="entry name" value="Transketolase-like_Pyr-bd"/>
</dbReference>
<dbReference type="InterPro" id="IPR033248">
    <property type="entry name" value="Transketolase_C"/>
</dbReference>
<dbReference type="InterPro" id="IPR049557">
    <property type="entry name" value="Transketolase_CS"/>
</dbReference>
<dbReference type="NCBIfam" id="TIGR00204">
    <property type="entry name" value="dxs"/>
    <property type="match status" value="1"/>
</dbReference>
<dbReference type="NCBIfam" id="NF003933">
    <property type="entry name" value="PRK05444.2-2"/>
    <property type="match status" value="1"/>
</dbReference>
<dbReference type="PANTHER" id="PTHR43322">
    <property type="entry name" value="1-D-DEOXYXYLULOSE 5-PHOSPHATE SYNTHASE-RELATED"/>
    <property type="match status" value="1"/>
</dbReference>
<dbReference type="PANTHER" id="PTHR43322:SF5">
    <property type="entry name" value="1-DEOXY-D-XYLULOSE-5-PHOSPHATE SYNTHASE, CHLOROPLASTIC"/>
    <property type="match status" value="1"/>
</dbReference>
<dbReference type="Pfam" id="PF13292">
    <property type="entry name" value="DXP_synthase_N"/>
    <property type="match status" value="1"/>
</dbReference>
<dbReference type="Pfam" id="PF02779">
    <property type="entry name" value="Transket_pyr"/>
    <property type="match status" value="1"/>
</dbReference>
<dbReference type="Pfam" id="PF02780">
    <property type="entry name" value="Transketolase_C"/>
    <property type="match status" value="1"/>
</dbReference>
<dbReference type="SMART" id="SM00861">
    <property type="entry name" value="Transket_pyr"/>
    <property type="match status" value="1"/>
</dbReference>
<dbReference type="SUPFAM" id="SSF52518">
    <property type="entry name" value="Thiamin diphosphate-binding fold (THDP-binding)"/>
    <property type="match status" value="2"/>
</dbReference>
<dbReference type="SUPFAM" id="SSF52922">
    <property type="entry name" value="TK C-terminal domain-like"/>
    <property type="match status" value="1"/>
</dbReference>
<dbReference type="PROSITE" id="PS00801">
    <property type="entry name" value="TRANSKETOLASE_1"/>
    <property type="match status" value="1"/>
</dbReference>
<accession>Q1MKN4</accession>
<organism>
    <name type="scientific">Rhizobium johnstonii (strain DSM 114642 / LMG 32736 / 3841)</name>
    <name type="common">Rhizobium leguminosarum bv. viciae</name>
    <dbReference type="NCBI Taxonomy" id="216596"/>
    <lineage>
        <taxon>Bacteria</taxon>
        <taxon>Pseudomonadati</taxon>
        <taxon>Pseudomonadota</taxon>
        <taxon>Alphaproteobacteria</taxon>
        <taxon>Hyphomicrobiales</taxon>
        <taxon>Rhizobiaceae</taxon>
        <taxon>Rhizobium/Agrobacterium group</taxon>
        <taxon>Rhizobium</taxon>
        <taxon>Rhizobium johnstonii</taxon>
    </lineage>
</organism>
<reference key="1">
    <citation type="journal article" date="2006" name="Genome Biol.">
        <title>The genome of Rhizobium leguminosarum has recognizable core and accessory components.</title>
        <authorList>
            <person name="Young J.P.W."/>
            <person name="Crossman L.C."/>
            <person name="Johnston A.W.B."/>
            <person name="Thomson N.R."/>
            <person name="Ghazoui Z.F."/>
            <person name="Hull K.H."/>
            <person name="Wexler M."/>
            <person name="Curson A.R.J."/>
            <person name="Todd J.D."/>
            <person name="Poole P.S."/>
            <person name="Mauchline T.H."/>
            <person name="East A.K."/>
            <person name="Quail M.A."/>
            <person name="Churcher C."/>
            <person name="Arrowsmith C."/>
            <person name="Cherevach I."/>
            <person name="Chillingworth T."/>
            <person name="Clarke K."/>
            <person name="Cronin A."/>
            <person name="Davis P."/>
            <person name="Fraser A."/>
            <person name="Hance Z."/>
            <person name="Hauser H."/>
            <person name="Jagels K."/>
            <person name="Moule S."/>
            <person name="Mungall K."/>
            <person name="Norbertczak H."/>
            <person name="Rabbinowitsch E."/>
            <person name="Sanders M."/>
            <person name="Simmonds M."/>
            <person name="Whitehead S."/>
            <person name="Parkhill J."/>
        </authorList>
    </citation>
    <scope>NUCLEOTIDE SEQUENCE [LARGE SCALE GENOMIC DNA]</scope>
    <source>
        <strain>DSM 114642 / LMG 32736 / 3841</strain>
    </source>
</reference>
<protein>
    <recommendedName>
        <fullName evidence="1">1-deoxy-D-xylulose-5-phosphate synthase</fullName>
        <ecNumber evidence="1">2.2.1.7</ecNumber>
    </recommendedName>
    <alternativeName>
        <fullName evidence="1">1-deoxyxylulose-5-phosphate synthase</fullName>
        <shortName evidence="1">DXP synthase</shortName>
        <shortName evidence="1">DXPS</shortName>
    </alternativeName>
</protein>
<keyword id="KW-0414">Isoprene biosynthesis</keyword>
<keyword id="KW-0460">Magnesium</keyword>
<keyword id="KW-0479">Metal-binding</keyword>
<keyword id="KW-0784">Thiamine biosynthesis</keyword>
<keyword id="KW-0786">Thiamine pyrophosphate</keyword>
<keyword id="KW-0808">Transferase</keyword>
<evidence type="ECO:0000255" key="1">
    <source>
        <dbReference type="HAMAP-Rule" id="MF_00315"/>
    </source>
</evidence>